<sequence length="100" mass="11179">MRLTPHEQDRLLISYAADLARRRRARGLRLNHPEAVAVITDHLLEGARDGRTVAELMVSGRDVLGRDDVMEGVPEMLHDVQVEATFPDGTKLVTVHHPIP</sequence>
<dbReference type="EC" id="3.5.1.5" evidence="1"/>
<dbReference type="EMBL" id="CP000518">
    <property type="protein sequence ID" value="ABL92045.1"/>
    <property type="molecule type" value="Genomic_DNA"/>
</dbReference>
<dbReference type="SMR" id="A1UGT7"/>
<dbReference type="STRING" id="189918.Mkms_2851"/>
<dbReference type="KEGG" id="mkm:Mkms_2851"/>
<dbReference type="HOGENOM" id="CLU_145825_1_0_11"/>
<dbReference type="OrthoDB" id="9797217at2"/>
<dbReference type="UniPathway" id="UPA00258">
    <property type="reaction ID" value="UER00370"/>
</dbReference>
<dbReference type="GO" id="GO:0005737">
    <property type="term" value="C:cytoplasm"/>
    <property type="evidence" value="ECO:0007669"/>
    <property type="project" value="UniProtKB-SubCell"/>
</dbReference>
<dbReference type="GO" id="GO:0016151">
    <property type="term" value="F:nickel cation binding"/>
    <property type="evidence" value="ECO:0007669"/>
    <property type="project" value="InterPro"/>
</dbReference>
<dbReference type="GO" id="GO:0009039">
    <property type="term" value="F:urease activity"/>
    <property type="evidence" value="ECO:0007669"/>
    <property type="project" value="UniProtKB-UniRule"/>
</dbReference>
<dbReference type="GO" id="GO:0043419">
    <property type="term" value="P:urea catabolic process"/>
    <property type="evidence" value="ECO:0007669"/>
    <property type="project" value="UniProtKB-UniRule"/>
</dbReference>
<dbReference type="CDD" id="cd00390">
    <property type="entry name" value="Urease_gamma"/>
    <property type="match status" value="1"/>
</dbReference>
<dbReference type="Gene3D" id="3.30.280.10">
    <property type="entry name" value="Urease, gamma-like subunit"/>
    <property type="match status" value="1"/>
</dbReference>
<dbReference type="HAMAP" id="MF_00739">
    <property type="entry name" value="Urease_gamma"/>
    <property type="match status" value="1"/>
</dbReference>
<dbReference type="InterPro" id="IPR012010">
    <property type="entry name" value="Urease_gamma"/>
</dbReference>
<dbReference type="InterPro" id="IPR002026">
    <property type="entry name" value="Urease_gamma/gamma-beta_su"/>
</dbReference>
<dbReference type="InterPro" id="IPR036463">
    <property type="entry name" value="Urease_gamma_sf"/>
</dbReference>
<dbReference type="InterPro" id="IPR050069">
    <property type="entry name" value="Urease_subunit"/>
</dbReference>
<dbReference type="NCBIfam" id="NF009712">
    <property type="entry name" value="PRK13241.1"/>
    <property type="match status" value="1"/>
</dbReference>
<dbReference type="NCBIfam" id="TIGR00193">
    <property type="entry name" value="urease_gam"/>
    <property type="match status" value="1"/>
</dbReference>
<dbReference type="PANTHER" id="PTHR33569">
    <property type="entry name" value="UREASE"/>
    <property type="match status" value="1"/>
</dbReference>
<dbReference type="PANTHER" id="PTHR33569:SF1">
    <property type="entry name" value="UREASE"/>
    <property type="match status" value="1"/>
</dbReference>
<dbReference type="Pfam" id="PF00547">
    <property type="entry name" value="Urease_gamma"/>
    <property type="match status" value="1"/>
</dbReference>
<dbReference type="PIRSF" id="PIRSF001223">
    <property type="entry name" value="Urease_gamma"/>
    <property type="match status" value="1"/>
</dbReference>
<dbReference type="SUPFAM" id="SSF54111">
    <property type="entry name" value="Urease, gamma-subunit"/>
    <property type="match status" value="1"/>
</dbReference>
<organism>
    <name type="scientific">Mycobacterium sp. (strain KMS)</name>
    <dbReference type="NCBI Taxonomy" id="189918"/>
    <lineage>
        <taxon>Bacteria</taxon>
        <taxon>Bacillati</taxon>
        <taxon>Actinomycetota</taxon>
        <taxon>Actinomycetes</taxon>
        <taxon>Mycobacteriales</taxon>
        <taxon>Mycobacteriaceae</taxon>
        <taxon>Mycobacterium</taxon>
    </lineage>
</organism>
<protein>
    <recommendedName>
        <fullName evidence="1">Urease subunit gamma</fullName>
        <ecNumber evidence="1">3.5.1.5</ecNumber>
    </recommendedName>
    <alternativeName>
        <fullName evidence="1">Urea amidohydrolase subunit gamma</fullName>
    </alternativeName>
</protein>
<evidence type="ECO:0000255" key="1">
    <source>
        <dbReference type="HAMAP-Rule" id="MF_00739"/>
    </source>
</evidence>
<comment type="catalytic activity">
    <reaction evidence="1">
        <text>urea + 2 H2O + H(+) = hydrogencarbonate + 2 NH4(+)</text>
        <dbReference type="Rhea" id="RHEA:20557"/>
        <dbReference type="ChEBI" id="CHEBI:15377"/>
        <dbReference type="ChEBI" id="CHEBI:15378"/>
        <dbReference type="ChEBI" id="CHEBI:16199"/>
        <dbReference type="ChEBI" id="CHEBI:17544"/>
        <dbReference type="ChEBI" id="CHEBI:28938"/>
        <dbReference type="EC" id="3.5.1.5"/>
    </reaction>
</comment>
<comment type="pathway">
    <text evidence="1">Nitrogen metabolism; urea degradation; CO(2) and NH(3) from urea (urease route): step 1/1.</text>
</comment>
<comment type="subunit">
    <text evidence="1">Heterotrimer of UreA (gamma), UreB (beta) and UreC (alpha) subunits. Three heterotrimers associate to form the active enzyme.</text>
</comment>
<comment type="subcellular location">
    <subcellularLocation>
        <location evidence="1">Cytoplasm</location>
    </subcellularLocation>
</comment>
<comment type="similarity">
    <text evidence="1">Belongs to the urease gamma subunit family.</text>
</comment>
<feature type="chain" id="PRO_1000046340" description="Urease subunit gamma">
    <location>
        <begin position="1"/>
        <end position="100"/>
    </location>
</feature>
<reference key="1">
    <citation type="submission" date="2006-12" db="EMBL/GenBank/DDBJ databases">
        <title>Complete sequence of chromosome of Mycobacterium sp. KMS.</title>
        <authorList>
            <consortium name="US DOE Joint Genome Institute"/>
            <person name="Copeland A."/>
            <person name="Lucas S."/>
            <person name="Lapidus A."/>
            <person name="Barry K."/>
            <person name="Detter J.C."/>
            <person name="Glavina del Rio T."/>
            <person name="Hammon N."/>
            <person name="Israni S."/>
            <person name="Dalin E."/>
            <person name="Tice H."/>
            <person name="Pitluck S."/>
            <person name="Kiss H."/>
            <person name="Brettin T."/>
            <person name="Bruce D."/>
            <person name="Han C."/>
            <person name="Tapia R."/>
            <person name="Gilna P."/>
            <person name="Schmutz J."/>
            <person name="Larimer F."/>
            <person name="Land M."/>
            <person name="Hauser L."/>
            <person name="Kyrpides N."/>
            <person name="Mikhailova N."/>
            <person name="Miller C.D."/>
            <person name="Richardson P."/>
        </authorList>
    </citation>
    <scope>NUCLEOTIDE SEQUENCE [LARGE SCALE GENOMIC DNA]</scope>
    <source>
        <strain>KMS</strain>
    </source>
</reference>
<keyword id="KW-0963">Cytoplasm</keyword>
<keyword id="KW-0378">Hydrolase</keyword>
<accession>A1UGT7</accession>
<name>URE3_MYCSK</name>
<gene>
    <name evidence="1" type="primary">ureA</name>
    <name type="ordered locus">Mkms_2851</name>
</gene>
<proteinExistence type="inferred from homology"/>